<gene>
    <name evidence="1" type="primary">truA</name>
    <name type="ordered locus">Rleg2_0059</name>
</gene>
<keyword id="KW-0413">Isomerase</keyword>
<keyword id="KW-1185">Reference proteome</keyword>
<keyword id="KW-0819">tRNA processing</keyword>
<sequence>MPRFRMTVEYDGGPYVGWQRQENGPSVQGAIEAAVLSLTGETVSIRGAGRTDSGVHAMGQVIHADLSKAWSPYQLQNALNAHLRLAGERVSILDVEAVAEFFDARFSALRRHYLYRIVSRRAPLALEAGKAWWVPKVLDHEVMHAAAQRLVGRHDFSTFRAAHCQANSPVRTLDRLDVTRSGELIEIRATAQSFLHNQIRSFAGTLKLAGEGKWTPDDVEAALEARDRKACGPVAPPDGLYFLQVDYPDVIPDRRRPVTDADDGDNLS</sequence>
<name>TRUA_RHILW</name>
<proteinExistence type="inferred from homology"/>
<comment type="function">
    <text evidence="1">Formation of pseudouridine at positions 38, 39 and 40 in the anticodon stem and loop of transfer RNAs.</text>
</comment>
<comment type="catalytic activity">
    <reaction evidence="1">
        <text>uridine(38/39/40) in tRNA = pseudouridine(38/39/40) in tRNA</text>
        <dbReference type="Rhea" id="RHEA:22376"/>
        <dbReference type="Rhea" id="RHEA-COMP:10085"/>
        <dbReference type="Rhea" id="RHEA-COMP:10087"/>
        <dbReference type="ChEBI" id="CHEBI:65314"/>
        <dbReference type="ChEBI" id="CHEBI:65315"/>
        <dbReference type="EC" id="5.4.99.12"/>
    </reaction>
</comment>
<comment type="subunit">
    <text evidence="1">Homodimer.</text>
</comment>
<comment type="similarity">
    <text evidence="1">Belongs to the tRNA pseudouridine synthase TruA family.</text>
</comment>
<accession>B5ZN21</accession>
<reference key="1">
    <citation type="journal article" date="2010" name="Stand. Genomic Sci.">
        <title>Complete genome sequence of Rhizobium leguminosarum bv trifolii strain WSM2304, an effective microsymbiont of the South American clover Trifolium polymorphum.</title>
        <authorList>
            <person name="Reeve W."/>
            <person name="O'Hara G."/>
            <person name="Chain P."/>
            <person name="Ardley J."/>
            <person name="Brau L."/>
            <person name="Nandesena K."/>
            <person name="Tiwari R."/>
            <person name="Malfatti S."/>
            <person name="Kiss H."/>
            <person name="Lapidus A."/>
            <person name="Copeland A."/>
            <person name="Nolan M."/>
            <person name="Land M."/>
            <person name="Ivanova N."/>
            <person name="Mavromatis K."/>
            <person name="Markowitz V."/>
            <person name="Kyrpides N."/>
            <person name="Melino V."/>
            <person name="Denton M."/>
            <person name="Yates R."/>
            <person name="Howieson J."/>
        </authorList>
    </citation>
    <scope>NUCLEOTIDE SEQUENCE [LARGE SCALE GENOMIC DNA]</scope>
    <source>
        <strain>WSM2304</strain>
    </source>
</reference>
<protein>
    <recommendedName>
        <fullName evidence="1">tRNA pseudouridine synthase A</fullName>
        <ecNumber evidence="1">5.4.99.12</ecNumber>
    </recommendedName>
    <alternativeName>
        <fullName evidence="1">tRNA pseudouridine(38-40) synthase</fullName>
    </alternativeName>
    <alternativeName>
        <fullName evidence="1">tRNA pseudouridylate synthase I</fullName>
    </alternativeName>
    <alternativeName>
        <fullName evidence="1">tRNA-uridine isomerase I</fullName>
    </alternativeName>
</protein>
<organism>
    <name type="scientific">Rhizobium leguminosarum bv. trifolii (strain WSM2304)</name>
    <dbReference type="NCBI Taxonomy" id="395492"/>
    <lineage>
        <taxon>Bacteria</taxon>
        <taxon>Pseudomonadati</taxon>
        <taxon>Pseudomonadota</taxon>
        <taxon>Alphaproteobacteria</taxon>
        <taxon>Hyphomicrobiales</taxon>
        <taxon>Rhizobiaceae</taxon>
        <taxon>Rhizobium/Agrobacterium group</taxon>
        <taxon>Rhizobium</taxon>
    </lineage>
</organism>
<feature type="chain" id="PRO_1000097773" description="tRNA pseudouridine synthase A">
    <location>
        <begin position="1"/>
        <end position="268"/>
    </location>
</feature>
<feature type="active site" description="Nucleophile" evidence="1">
    <location>
        <position position="52"/>
    </location>
</feature>
<feature type="binding site" evidence="1">
    <location>
        <position position="113"/>
    </location>
    <ligand>
        <name>substrate</name>
    </ligand>
</feature>
<dbReference type="EC" id="5.4.99.12" evidence="1"/>
<dbReference type="EMBL" id="CP001191">
    <property type="protein sequence ID" value="ACI53362.1"/>
    <property type="molecule type" value="Genomic_DNA"/>
</dbReference>
<dbReference type="RefSeq" id="WP_012556406.1">
    <property type="nucleotide sequence ID" value="NC_011369.1"/>
</dbReference>
<dbReference type="SMR" id="B5ZN21"/>
<dbReference type="STRING" id="395492.Rleg2_0059"/>
<dbReference type="KEGG" id="rlt:Rleg2_0059"/>
<dbReference type="eggNOG" id="COG0101">
    <property type="taxonomic scope" value="Bacteria"/>
</dbReference>
<dbReference type="HOGENOM" id="CLU_014673_0_2_5"/>
<dbReference type="Proteomes" id="UP000008330">
    <property type="component" value="Chromosome"/>
</dbReference>
<dbReference type="GO" id="GO:0003723">
    <property type="term" value="F:RNA binding"/>
    <property type="evidence" value="ECO:0007669"/>
    <property type="project" value="InterPro"/>
</dbReference>
<dbReference type="GO" id="GO:0160147">
    <property type="term" value="F:tRNA pseudouridine(38-40) synthase activity"/>
    <property type="evidence" value="ECO:0007669"/>
    <property type="project" value="UniProtKB-EC"/>
</dbReference>
<dbReference type="GO" id="GO:0031119">
    <property type="term" value="P:tRNA pseudouridine synthesis"/>
    <property type="evidence" value="ECO:0007669"/>
    <property type="project" value="UniProtKB-UniRule"/>
</dbReference>
<dbReference type="CDD" id="cd02570">
    <property type="entry name" value="PseudoU_synth_EcTruA"/>
    <property type="match status" value="1"/>
</dbReference>
<dbReference type="FunFam" id="3.30.70.580:FF:000001">
    <property type="entry name" value="tRNA pseudouridine synthase A"/>
    <property type="match status" value="1"/>
</dbReference>
<dbReference type="Gene3D" id="3.30.70.660">
    <property type="entry name" value="Pseudouridine synthase I, catalytic domain, C-terminal subdomain"/>
    <property type="match status" value="1"/>
</dbReference>
<dbReference type="Gene3D" id="3.30.70.580">
    <property type="entry name" value="Pseudouridine synthase I, catalytic domain, N-terminal subdomain"/>
    <property type="match status" value="1"/>
</dbReference>
<dbReference type="HAMAP" id="MF_00171">
    <property type="entry name" value="TruA"/>
    <property type="match status" value="1"/>
</dbReference>
<dbReference type="InterPro" id="IPR020103">
    <property type="entry name" value="PsdUridine_synth_cat_dom_sf"/>
</dbReference>
<dbReference type="InterPro" id="IPR001406">
    <property type="entry name" value="PsdUridine_synth_TruA"/>
</dbReference>
<dbReference type="InterPro" id="IPR020097">
    <property type="entry name" value="PsdUridine_synth_TruA_a/b_dom"/>
</dbReference>
<dbReference type="InterPro" id="IPR020095">
    <property type="entry name" value="PsdUridine_synth_TruA_C"/>
</dbReference>
<dbReference type="InterPro" id="IPR020094">
    <property type="entry name" value="TruA/RsuA/RluB/E/F_N"/>
</dbReference>
<dbReference type="NCBIfam" id="TIGR00071">
    <property type="entry name" value="hisT_truA"/>
    <property type="match status" value="1"/>
</dbReference>
<dbReference type="PANTHER" id="PTHR11142">
    <property type="entry name" value="PSEUDOURIDYLATE SYNTHASE"/>
    <property type="match status" value="1"/>
</dbReference>
<dbReference type="PANTHER" id="PTHR11142:SF0">
    <property type="entry name" value="TRNA PSEUDOURIDINE SYNTHASE-LIKE 1"/>
    <property type="match status" value="1"/>
</dbReference>
<dbReference type="Pfam" id="PF01416">
    <property type="entry name" value="PseudoU_synth_1"/>
    <property type="match status" value="2"/>
</dbReference>
<dbReference type="PIRSF" id="PIRSF001430">
    <property type="entry name" value="tRNA_psdUrid_synth"/>
    <property type="match status" value="1"/>
</dbReference>
<dbReference type="SUPFAM" id="SSF55120">
    <property type="entry name" value="Pseudouridine synthase"/>
    <property type="match status" value="1"/>
</dbReference>
<evidence type="ECO:0000255" key="1">
    <source>
        <dbReference type="HAMAP-Rule" id="MF_00171"/>
    </source>
</evidence>